<accession>A4QJN8</accession>
<gene>
    <name type="primary">rpl22</name>
</gene>
<geneLocation type="chloroplast"/>
<evidence type="ECO:0000250" key="1"/>
<evidence type="ECO:0000305" key="2"/>
<name>RK22_AETGR</name>
<proteinExistence type="inferred from homology"/>
<reference key="1">
    <citation type="submission" date="2007-03" db="EMBL/GenBank/DDBJ databases">
        <title>Sequencing analysis of Aethionema grandiflorum chloroplast DNA.</title>
        <authorList>
            <person name="Hosouchi T."/>
            <person name="Tsuruoka H."/>
            <person name="Kotani H."/>
        </authorList>
    </citation>
    <scope>NUCLEOTIDE SEQUENCE [LARGE SCALE GENOMIC DNA]</scope>
</reference>
<organism>
    <name type="scientific">Aethionema grandiflorum</name>
    <name type="common">Persian stone-cress</name>
    <dbReference type="NCBI Taxonomy" id="72657"/>
    <lineage>
        <taxon>Eukaryota</taxon>
        <taxon>Viridiplantae</taxon>
        <taxon>Streptophyta</taxon>
        <taxon>Embryophyta</taxon>
        <taxon>Tracheophyta</taxon>
        <taxon>Spermatophyta</taxon>
        <taxon>Magnoliopsida</taxon>
        <taxon>eudicotyledons</taxon>
        <taxon>Gunneridae</taxon>
        <taxon>Pentapetalae</taxon>
        <taxon>rosids</taxon>
        <taxon>malvids</taxon>
        <taxon>Brassicales</taxon>
        <taxon>Brassicaceae</taxon>
        <taxon>Aethionemeae</taxon>
        <taxon>Aethionema</taxon>
    </lineage>
</organism>
<sequence length="160" mass="18620">MIKKKKKKSYTSVYALGQYISMSTHKARRVIDQIRGRSYEEALMILELMPYRGCYPIFKLVYSAAANASHNKGFKETNLVISKAEVNQGNTVKKLKPRARGRSYPIKRPTCHITIVLEDISFYQQYEEYLMYLKNPGCRNEKRNLPCYETYSSGGPWDKK</sequence>
<protein>
    <recommendedName>
        <fullName evidence="2">Large ribosomal subunit protein uL22c</fullName>
    </recommendedName>
    <alternativeName>
        <fullName>50S ribosomal protein L22, chloroplastic</fullName>
    </alternativeName>
</protein>
<comment type="function">
    <text evidence="1">This protein binds specifically to 23S rRNA.</text>
</comment>
<comment type="function">
    <text evidence="1">The globular domain of the protein is located near the polypeptide exit tunnel on the outside of the subunit, while an extended beta-hairpin is found that lines the wall of the exit tunnel in the center of the 70S ribosome.</text>
</comment>
<comment type="subunit">
    <text evidence="1">Part of the 50S ribosomal subunit.</text>
</comment>
<comment type="subcellular location">
    <subcellularLocation>
        <location>Plastid</location>
        <location>Chloroplast</location>
    </subcellularLocation>
</comment>
<comment type="similarity">
    <text evidence="2">Belongs to the universal ribosomal protein uL22 family.</text>
</comment>
<dbReference type="EMBL" id="AP009367">
    <property type="protein sequence ID" value="BAF49893.1"/>
    <property type="molecule type" value="Genomic_DNA"/>
</dbReference>
<dbReference type="RefSeq" id="YP_001123069.1">
    <property type="nucleotide sequence ID" value="NC_009266.1"/>
</dbReference>
<dbReference type="SMR" id="A4QJN8"/>
<dbReference type="GeneID" id="4962255"/>
<dbReference type="GO" id="GO:0009507">
    <property type="term" value="C:chloroplast"/>
    <property type="evidence" value="ECO:0007669"/>
    <property type="project" value="UniProtKB-SubCell"/>
</dbReference>
<dbReference type="GO" id="GO:0015934">
    <property type="term" value="C:large ribosomal subunit"/>
    <property type="evidence" value="ECO:0007669"/>
    <property type="project" value="InterPro"/>
</dbReference>
<dbReference type="GO" id="GO:0019843">
    <property type="term" value="F:rRNA binding"/>
    <property type="evidence" value="ECO:0007669"/>
    <property type="project" value="UniProtKB-UniRule"/>
</dbReference>
<dbReference type="GO" id="GO:0003735">
    <property type="term" value="F:structural constituent of ribosome"/>
    <property type="evidence" value="ECO:0007669"/>
    <property type="project" value="InterPro"/>
</dbReference>
<dbReference type="GO" id="GO:0006412">
    <property type="term" value="P:translation"/>
    <property type="evidence" value="ECO:0007669"/>
    <property type="project" value="UniProtKB-UniRule"/>
</dbReference>
<dbReference type="CDD" id="cd00336">
    <property type="entry name" value="Ribosomal_L22"/>
    <property type="match status" value="1"/>
</dbReference>
<dbReference type="FunFam" id="3.90.470.10:FF:000006">
    <property type="entry name" value="50S ribosomal protein L22, chloroplastic"/>
    <property type="match status" value="1"/>
</dbReference>
<dbReference type="Gene3D" id="3.90.470.10">
    <property type="entry name" value="Ribosomal protein L22/L17"/>
    <property type="match status" value="1"/>
</dbReference>
<dbReference type="HAMAP" id="MF_01331_B">
    <property type="entry name" value="Ribosomal_uL22_B"/>
    <property type="match status" value="1"/>
</dbReference>
<dbReference type="InterPro" id="IPR001063">
    <property type="entry name" value="Ribosomal_uL22"/>
</dbReference>
<dbReference type="InterPro" id="IPR005727">
    <property type="entry name" value="Ribosomal_uL22_bac/chlpt-type"/>
</dbReference>
<dbReference type="InterPro" id="IPR047867">
    <property type="entry name" value="Ribosomal_uL22_bac/org-type"/>
</dbReference>
<dbReference type="InterPro" id="IPR018260">
    <property type="entry name" value="Ribosomal_uL22_CS"/>
</dbReference>
<dbReference type="InterPro" id="IPR036394">
    <property type="entry name" value="Ribosomal_uL22_sf"/>
</dbReference>
<dbReference type="NCBIfam" id="TIGR01044">
    <property type="entry name" value="rplV_bact"/>
    <property type="match status" value="1"/>
</dbReference>
<dbReference type="PANTHER" id="PTHR13501">
    <property type="entry name" value="CHLOROPLAST 50S RIBOSOMAL PROTEIN L22-RELATED"/>
    <property type="match status" value="1"/>
</dbReference>
<dbReference type="PANTHER" id="PTHR13501:SF10">
    <property type="entry name" value="LARGE RIBOSOMAL SUBUNIT PROTEIN UL22M"/>
    <property type="match status" value="1"/>
</dbReference>
<dbReference type="Pfam" id="PF00237">
    <property type="entry name" value="Ribosomal_L22"/>
    <property type="match status" value="1"/>
</dbReference>
<dbReference type="SUPFAM" id="SSF54843">
    <property type="entry name" value="Ribosomal protein L22"/>
    <property type="match status" value="1"/>
</dbReference>
<dbReference type="PROSITE" id="PS00464">
    <property type="entry name" value="RIBOSOMAL_L22"/>
    <property type="match status" value="1"/>
</dbReference>
<feature type="chain" id="PRO_0000354553" description="Large ribosomal subunit protein uL22c">
    <location>
        <begin position="1"/>
        <end position="160"/>
    </location>
</feature>
<keyword id="KW-0150">Chloroplast</keyword>
<keyword id="KW-0934">Plastid</keyword>
<keyword id="KW-0687">Ribonucleoprotein</keyword>
<keyword id="KW-0689">Ribosomal protein</keyword>
<keyword id="KW-0694">RNA-binding</keyword>
<keyword id="KW-0699">rRNA-binding</keyword>